<evidence type="ECO:0000250" key="1"/>
<evidence type="ECO:0000305" key="2"/>
<organism>
    <name type="scientific">Caenorhabditis elegans</name>
    <dbReference type="NCBI Taxonomy" id="6239"/>
    <lineage>
        <taxon>Eukaryota</taxon>
        <taxon>Metazoa</taxon>
        <taxon>Ecdysozoa</taxon>
        <taxon>Nematoda</taxon>
        <taxon>Chromadorea</taxon>
        <taxon>Rhabditida</taxon>
        <taxon>Rhabditina</taxon>
        <taxon>Rhabditomorpha</taxon>
        <taxon>Rhabditoidea</taxon>
        <taxon>Rhabditidae</taxon>
        <taxon>Peloderinae</taxon>
        <taxon>Caenorhabditis</taxon>
    </lineage>
</organism>
<protein>
    <recommendedName>
        <fullName>Probable dynein light chain 2, cytoplasmic</fullName>
    </recommendedName>
</protein>
<feature type="chain" id="PRO_0000195150" description="Probable dynein light chain 2, cytoplasmic">
    <location>
        <begin position="1"/>
        <end position="90"/>
    </location>
</feature>
<name>DYL2_CAEEL</name>
<comment type="function">
    <text evidence="1">Acts as one of several non-catalytic accessory components of a dynein complex.</text>
</comment>
<comment type="subcellular location">
    <subcellularLocation>
        <location evidence="1">Cytoplasm</location>
        <location evidence="1">Cytoskeleton</location>
    </subcellularLocation>
</comment>
<comment type="similarity">
    <text evidence="2">Belongs to the dynein light chain family.</text>
</comment>
<gene>
    <name type="primary">dlc-2</name>
    <name type="ORF">M18.2</name>
</gene>
<accession>Q21557</accession>
<reference key="1">
    <citation type="journal article" date="1998" name="Science">
        <title>Genome sequence of the nematode C. elegans: a platform for investigating biology.</title>
        <authorList>
            <consortium name="The C. elegans sequencing consortium"/>
        </authorList>
    </citation>
    <scope>NUCLEOTIDE SEQUENCE [LARGE SCALE GENOMIC DNA]</scope>
    <source>
        <strain>Bristol N2</strain>
    </source>
</reference>
<sequence length="90" mass="10486">MSEEKIEVKETDMEDPQRDMVISVVREAQRLYNIDKDVAAFVKEELDKKFGATWHVICGKCFGSRVSYEMGHFILLKCNKVNVMIYKCGY</sequence>
<keyword id="KW-0963">Cytoplasm</keyword>
<keyword id="KW-0206">Cytoskeleton</keyword>
<keyword id="KW-0243">Dynein</keyword>
<keyword id="KW-0493">Microtubule</keyword>
<keyword id="KW-0505">Motor protein</keyword>
<keyword id="KW-1185">Reference proteome</keyword>
<proteinExistence type="inferred from homology"/>
<dbReference type="EMBL" id="Z68507">
    <property type="protein sequence ID" value="CAA92827.2"/>
    <property type="molecule type" value="Genomic_DNA"/>
</dbReference>
<dbReference type="PIR" id="T23795">
    <property type="entry name" value="T23795"/>
</dbReference>
<dbReference type="RefSeq" id="NP_502298.2">
    <property type="nucleotide sequence ID" value="NM_069897.6"/>
</dbReference>
<dbReference type="SMR" id="Q21557"/>
<dbReference type="BioGRID" id="52154">
    <property type="interactions" value="1"/>
</dbReference>
<dbReference type="DIP" id="DIP-27196N"/>
<dbReference type="FunCoup" id="Q21557">
    <property type="interactions" value="4"/>
</dbReference>
<dbReference type="STRING" id="6239.M18.2.1"/>
<dbReference type="PaxDb" id="6239-M18.2"/>
<dbReference type="PeptideAtlas" id="Q21557"/>
<dbReference type="EnsemblMetazoa" id="M18.2.1">
    <property type="protein sequence ID" value="M18.2.1"/>
    <property type="gene ID" value="WBGene00010888"/>
</dbReference>
<dbReference type="GeneID" id="187460"/>
<dbReference type="KEGG" id="cel:CELE_M18.2"/>
<dbReference type="UCSC" id="M18.2">
    <property type="organism name" value="c. elegans"/>
</dbReference>
<dbReference type="AGR" id="WB:WBGene00010888"/>
<dbReference type="CTD" id="187460"/>
<dbReference type="WormBase" id="M18.2">
    <property type="protein sequence ID" value="CE36658"/>
    <property type="gene ID" value="WBGene00010888"/>
    <property type="gene designation" value="dlc-2"/>
</dbReference>
<dbReference type="eggNOG" id="KOG3430">
    <property type="taxonomic scope" value="Eukaryota"/>
</dbReference>
<dbReference type="HOGENOM" id="CLU_070944_4_0_1"/>
<dbReference type="InParanoid" id="Q21557"/>
<dbReference type="OMA" id="QLGATWH"/>
<dbReference type="OrthoDB" id="10033309at2759"/>
<dbReference type="PhylomeDB" id="Q21557"/>
<dbReference type="Reactome" id="R-CEL-1632852">
    <property type="pathway name" value="Macroautophagy"/>
</dbReference>
<dbReference type="Reactome" id="R-CEL-5620924">
    <property type="pathway name" value="Intraflagellar transport"/>
</dbReference>
<dbReference type="Reactome" id="R-CEL-6798695">
    <property type="pathway name" value="Neutrophil degranulation"/>
</dbReference>
<dbReference type="Reactome" id="R-CEL-6807878">
    <property type="pathway name" value="COPI-mediated anterograde transport"/>
</dbReference>
<dbReference type="Reactome" id="R-CEL-6811436">
    <property type="pathway name" value="COPI-independent Golgi-to-ER retrograde traffic"/>
</dbReference>
<dbReference type="Reactome" id="R-CEL-9646399">
    <property type="pathway name" value="Aggrephagy"/>
</dbReference>
<dbReference type="PRO" id="PR:Q21557"/>
<dbReference type="Proteomes" id="UP000001940">
    <property type="component" value="Chromosome IV"/>
</dbReference>
<dbReference type="Bgee" id="WBGene00010888">
    <property type="expression patterns" value="Expressed in larva and 3 other cell types or tissues"/>
</dbReference>
<dbReference type="GO" id="GO:0005737">
    <property type="term" value="C:cytoplasm"/>
    <property type="evidence" value="ECO:0007669"/>
    <property type="project" value="UniProtKB-KW"/>
</dbReference>
<dbReference type="GO" id="GO:0005868">
    <property type="term" value="C:cytoplasmic dynein complex"/>
    <property type="evidence" value="ECO:0000318"/>
    <property type="project" value="GO_Central"/>
</dbReference>
<dbReference type="GO" id="GO:0005874">
    <property type="term" value="C:microtubule"/>
    <property type="evidence" value="ECO:0007669"/>
    <property type="project" value="UniProtKB-KW"/>
</dbReference>
<dbReference type="GO" id="GO:0045505">
    <property type="term" value="F:dynein intermediate chain binding"/>
    <property type="evidence" value="ECO:0000318"/>
    <property type="project" value="GO_Central"/>
</dbReference>
<dbReference type="GO" id="GO:0007017">
    <property type="term" value="P:microtubule-based process"/>
    <property type="evidence" value="ECO:0007669"/>
    <property type="project" value="InterPro"/>
</dbReference>
<dbReference type="FunFam" id="3.30.740.10:FF:000006">
    <property type="entry name" value="Dynein light chain"/>
    <property type="match status" value="1"/>
</dbReference>
<dbReference type="Gene3D" id="3.30.740.10">
    <property type="entry name" value="Protein Inhibitor Of Neuronal Nitric Oxide Synthase"/>
    <property type="match status" value="1"/>
</dbReference>
<dbReference type="InterPro" id="IPR037177">
    <property type="entry name" value="DLC_sf"/>
</dbReference>
<dbReference type="InterPro" id="IPR019763">
    <property type="entry name" value="Dynein_light_1/2_CS"/>
</dbReference>
<dbReference type="InterPro" id="IPR001372">
    <property type="entry name" value="Dynein_light_chain_typ-1/2"/>
</dbReference>
<dbReference type="PANTHER" id="PTHR11886">
    <property type="entry name" value="DYNEIN LIGHT CHAIN"/>
    <property type="match status" value="1"/>
</dbReference>
<dbReference type="PANTHER" id="PTHR11886:SF55">
    <property type="entry name" value="DYNEIN LIGHT CHAIN 2, CYTOPLASMIC-RELATED"/>
    <property type="match status" value="1"/>
</dbReference>
<dbReference type="Pfam" id="PF01221">
    <property type="entry name" value="Dynein_light"/>
    <property type="match status" value="1"/>
</dbReference>
<dbReference type="SMART" id="SM01375">
    <property type="entry name" value="Dynein_light"/>
    <property type="match status" value="1"/>
</dbReference>
<dbReference type="SUPFAM" id="SSF54648">
    <property type="entry name" value="DLC"/>
    <property type="match status" value="1"/>
</dbReference>
<dbReference type="PROSITE" id="PS01239">
    <property type="entry name" value="DYNEIN_LIGHT_1"/>
    <property type="match status" value="1"/>
</dbReference>